<dbReference type="EMBL" id="AE001439">
    <property type="protein sequence ID" value="AAD06804.1"/>
    <property type="molecule type" value="Genomic_DNA"/>
</dbReference>
<dbReference type="PIR" id="D71833">
    <property type="entry name" value="D71833"/>
</dbReference>
<dbReference type="RefSeq" id="WP_001030180.1">
    <property type="nucleotide sequence ID" value="NZ_CP011330.1"/>
</dbReference>
<dbReference type="KEGG" id="hpj:jhp_1220"/>
<dbReference type="PATRIC" id="fig|85963.30.peg.1351"/>
<dbReference type="eggNOG" id="COG0201">
    <property type="taxonomic scope" value="Bacteria"/>
</dbReference>
<dbReference type="Proteomes" id="UP000000804">
    <property type="component" value="Chromosome"/>
</dbReference>
<dbReference type="GO" id="GO:0005886">
    <property type="term" value="C:plasma membrane"/>
    <property type="evidence" value="ECO:0007669"/>
    <property type="project" value="UniProtKB-SubCell"/>
</dbReference>
<dbReference type="GO" id="GO:0065002">
    <property type="term" value="P:intracellular protein transmembrane transport"/>
    <property type="evidence" value="ECO:0007669"/>
    <property type="project" value="UniProtKB-UniRule"/>
</dbReference>
<dbReference type="GO" id="GO:0006605">
    <property type="term" value="P:protein targeting"/>
    <property type="evidence" value="ECO:0007669"/>
    <property type="project" value="UniProtKB-UniRule"/>
</dbReference>
<dbReference type="GO" id="GO:0043952">
    <property type="term" value="P:protein transport by the Sec complex"/>
    <property type="evidence" value="ECO:0007669"/>
    <property type="project" value="UniProtKB-UniRule"/>
</dbReference>
<dbReference type="FunFam" id="1.10.3370.10:FF:000004">
    <property type="entry name" value="Protein translocase subunit SecY"/>
    <property type="match status" value="1"/>
</dbReference>
<dbReference type="Gene3D" id="1.10.3370.10">
    <property type="entry name" value="SecY subunit domain"/>
    <property type="match status" value="1"/>
</dbReference>
<dbReference type="HAMAP" id="MF_01465">
    <property type="entry name" value="SecY"/>
    <property type="match status" value="1"/>
</dbReference>
<dbReference type="InterPro" id="IPR026593">
    <property type="entry name" value="SecY"/>
</dbReference>
<dbReference type="InterPro" id="IPR002208">
    <property type="entry name" value="SecY/SEC61-alpha"/>
</dbReference>
<dbReference type="InterPro" id="IPR030659">
    <property type="entry name" value="SecY_CS"/>
</dbReference>
<dbReference type="InterPro" id="IPR023201">
    <property type="entry name" value="SecY_dom_sf"/>
</dbReference>
<dbReference type="NCBIfam" id="TIGR00967">
    <property type="entry name" value="3a0501s007"/>
    <property type="match status" value="1"/>
</dbReference>
<dbReference type="PANTHER" id="PTHR10906">
    <property type="entry name" value="SECY/SEC61-ALPHA FAMILY MEMBER"/>
    <property type="match status" value="1"/>
</dbReference>
<dbReference type="Pfam" id="PF00344">
    <property type="entry name" value="SecY"/>
    <property type="match status" value="1"/>
</dbReference>
<dbReference type="PIRSF" id="PIRSF004557">
    <property type="entry name" value="SecY"/>
    <property type="match status" value="1"/>
</dbReference>
<dbReference type="PRINTS" id="PR00303">
    <property type="entry name" value="SECYTRNLCASE"/>
</dbReference>
<dbReference type="SUPFAM" id="SSF103491">
    <property type="entry name" value="Preprotein translocase SecY subunit"/>
    <property type="match status" value="1"/>
</dbReference>
<dbReference type="PROSITE" id="PS00755">
    <property type="entry name" value="SECY_1"/>
    <property type="match status" value="1"/>
</dbReference>
<dbReference type="PROSITE" id="PS00756">
    <property type="entry name" value="SECY_2"/>
    <property type="match status" value="1"/>
</dbReference>
<evidence type="ECO:0000255" key="1">
    <source>
        <dbReference type="HAMAP-Rule" id="MF_01465"/>
    </source>
</evidence>
<proteinExistence type="inferred from homology"/>
<reference key="1">
    <citation type="journal article" date="1999" name="Nature">
        <title>Genomic sequence comparison of two unrelated isolates of the human gastric pathogen Helicobacter pylori.</title>
        <authorList>
            <person name="Alm R.A."/>
            <person name="Ling L.-S.L."/>
            <person name="Moir D.T."/>
            <person name="King B.L."/>
            <person name="Brown E.D."/>
            <person name="Doig P.C."/>
            <person name="Smith D.R."/>
            <person name="Noonan B."/>
            <person name="Guild B.C."/>
            <person name="deJonge B.L."/>
            <person name="Carmel G."/>
            <person name="Tummino P.J."/>
            <person name="Caruso A."/>
            <person name="Uria-Nickelsen M."/>
            <person name="Mills D.M."/>
            <person name="Ives C."/>
            <person name="Gibson R."/>
            <person name="Merberg D."/>
            <person name="Mills S.D."/>
            <person name="Jiang Q."/>
            <person name="Taylor D.E."/>
            <person name="Vovis G.F."/>
            <person name="Trust T.J."/>
        </authorList>
    </citation>
    <scope>NUCLEOTIDE SEQUENCE [LARGE SCALE GENOMIC DNA]</scope>
    <source>
        <strain>J99 / ATCC 700824</strain>
    </source>
</reference>
<organism>
    <name type="scientific">Helicobacter pylori (strain J99 / ATCC 700824)</name>
    <name type="common">Campylobacter pylori J99</name>
    <dbReference type="NCBI Taxonomy" id="85963"/>
    <lineage>
        <taxon>Bacteria</taxon>
        <taxon>Pseudomonadati</taxon>
        <taxon>Campylobacterota</taxon>
        <taxon>Epsilonproteobacteria</taxon>
        <taxon>Campylobacterales</taxon>
        <taxon>Helicobacteraceae</taxon>
        <taxon>Helicobacter</taxon>
    </lineage>
</organism>
<feature type="chain" id="PRO_0000131726" description="Protein translocase subunit SecY">
    <location>
        <begin position="1"/>
        <end position="420"/>
    </location>
</feature>
<feature type="transmembrane region" description="Helical" evidence="1">
    <location>
        <begin position="9"/>
        <end position="29"/>
    </location>
</feature>
<feature type="transmembrane region" description="Helical" evidence="1">
    <location>
        <begin position="61"/>
        <end position="81"/>
    </location>
</feature>
<feature type="transmembrane region" description="Helical" evidence="1">
    <location>
        <begin position="104"/>
        <end position="124"/>
    </location>
</feature>
<feature type="transmembrane region" description="Helical" evidence="1">
    <location>
        <begin position="141"/>
        <end position="161"/>
    </location>
</feature>
<feature type="transmembrane region" description="Helical" evidence="1">
    <location>
        <begin position="173"/>
        <end position="193"/>
    </location>
</feature>
<feature type="transmembrane region" description="Helical" evidence="1">
    <location>
        <begin position="203"/>
        <end position="223"/>
    </location>
</feature>
<feature type="transmembrane region" description="Helical" evidence="1">
    <location>
        <begin position="257"/>
        <end position="277"/>
    </location>
</feature>
<feature type="transmembrane region" description="Helical" evidence="1">
    <location>
        <begin position="300"/>
        <end position="320"/>
    </location>
</feature>
<feature type="transmembrane region" description="Helical" evidence="1">
    <location>
        <begin position="355"/>
        <end position="375"/>
    </location>
</feature>
<feature type="transmembrane region" description="Helical" evidence="1">
    <location>
        <begin position="377"/>
        <end position="397"/>
    </location>
</feature>
<comment type="function">
    <text evidence="1">The central subunit of the protein translocation channel SecYEG. Consists of two halves formed by TMs 1-5 and 6-10. These two domains form a lateral gate at the front which open onto the bilayer between TMs 2 and 7, and are clamped together by SecE at the back. The channel is closed by both a pore ring composed of hydrophobic SecY resides and a short helix (helix 2A) on the extracellular side of the membrane which forms a plug. The plug probably moves laterally to allow the channel to open. The ring and the pore may move independently.</text>
</comment>
<comment type="subunit">
    <text evidence="1">Component of the Sec protein translocase complex. Heterotrimer consisting of SecY, SecE and SecG subunits. The heterotrimers can form oligomers, although 1 heterotrimer is thought to be able to translocate proteins. Interacts with the ribosome. Interacts with SecDF, and other proteins may be involved. Interacts with SecA.</text>
</comment>
<comment type="subcellular location">
    <subcellularLocation>
        <location evidence="1">Cell inner membrane</location>
        <topology evidence="1">Multi-pass membrane protein</topology>
    </subcellularLocation>
</comment>
<comment type="similarity">
    <text evidence="1">Belongs to the SecY/SEC61-alpha family.</text>
</comment>
<keyword id="KW-0997">Cell inner membrane</keyword>
<keyword id="KW-1003">Cell membrane</keyword>
<keyword id="KW-0472">Membrane</keyword>
<keyword id="KW-0653">Protein transport</keyword>
<keyword id="KW-0811">Translocation</keyword>
<keyword id="KW-0812">Transmembrane</keyword>
<keyword id="KW-1133">Transmembrane helix</keyword>
<keyword id="KW-0813">Transport</keyword>
<sequence>MNKAIASKILITLGFLFLYRVLAYIPIPGVDLAAIKAFFDSNSNNALGLFNMFSGNAVSRLSIISLGIMPYITSSIIMELLSATFPNLAKMKKERDGMQKYMQIVRYLTILITLIQAVSVSVGLRSISGGANGAIMIDMQVFMIVSAFSMLTGTMLLMWIGEQITQRGVGNGISLIIFAGIVSGIPSAISGTFNLVNTGVINILMLIGIVLIVLATIFAIIYVELAERRIPISYARKVVMQNQNKRIMNYIPIKLNLSGVIPPIFASALLVFPSTILQQATSNKTLQAIADFLSPQGYAYNILMFLLIIFFAYFYSSIVFNSKDIADNLRRNGGYIPGLRPGEGTSSFLNAVASKLTLWGSLYLALISTVPWILVKAMGVPFYFGGTAVLIVVQVAIDTMKKIEAQIYMSKYKTLSAVGF</sequence>
<protein>
    <recommendedName>
        <fullName evidence="1">Protein translocase subunit SecY</fullName>
    </recommendedName>
</protein>
<name>SECY_HELPJ</name>
<accession>Q9ZJS9</accession>
<gene>
    <name evidence="1" type="primary">secY</name>
    <name type="ordered locus">jhp_1220</name>
</gene>